<evidence type="ECO:0000255" key="1">
    <source>
        <dbReference type="HAMAP-Rule" id="MF_00182"/>
    </source>
</evidence>
<sequence length="314" mass="33697">MPLRLIFMGTPDFAVPTLQQLVAHGHEIAAVYTREARPAGRGMKLQPTPVAREAQRLGLPVLTPKTLKTQESQDQLRSYGADAAVVVAYGLILPQAILDAPRYGCYNLHASLLPRWRGAAPINRAVMAGDAESGVMVMKIDAGLDTGDVAMAERVPITDAMTASDLHDTLAPLGADLMARAMDALERGELRLTKQSEQGVASTVTYAAKIDKAEAHIVWSNPAREVLRHIHGLSPFPGAWCEMPVDGEAVRIKILRCELAEGAGSPGDLLDDRLTIACKDGAIRVLELQRAGKPPMKAAAFLNGTPLTPPLRLD</sequence>
<accession>Q3SN28</accession>
<gene>
    <name evidence="1" type="primary">fmt</name>
    <name type="ordered locus">Nwi_3065</name>
</gene>
<keyword id="KW-0648">Protein biosynthesis</keyword>
<keyword id="KW-1185">Reference proteome</keyword>
<keyword id="KW-0808">Transferase</keyword>
<feature type="chain" id="PRO_1000020112" description="Methionyl-tRNA formyltransferase">
    <location>
        <begin position="1"/>
        <end position="314"/>
    </location>
</feature>
<feature type="binding site" evidence="1">
    <location>
        <begin position="111"/>
        <end position="114"/>
    </location>
    <ligand>
        <name>(6S)-5,6,7,8-tetrahydrofolate</name>
        <dbReference type="ChEBI" id="CHEBI:57453"/>
    </ligand>
</feature>
<organism>
    <name type="scientific">Nitrobacter winogradskyi (strain ATCC 25391 / DSM 10237 / CIP 104748 / NCIMB 11846 / Nb-255)</name>
    <dbReference type="NCBI Taxonomy" id="323098"/>
    <lineage>
        <taxon>Bacteria</taxon>
        <taxon>Pseudomonadati</taxon>
        <taxon>Pseudomonadota</taxon>
        <taxon>Alphaproteobacteria</taxon>
        <taxon>Hyphomicrobiales</taxon>
        <taxon>Nitrobacteraceae</taxon>
        <taxon>Nitrobacter</taxon>
    </lineage>
</organism>
<name>FMT_NITWN</name>
<comment type="function">
    <text evidence="1">Attaches a formyl group to the free amino group of methionyl-tRNA(fMet). The formyl group appears to play a dual role in the initiator identity of N-formylmethionyl-tRNA by promoting its recognition by IF2 and preventing the misappropriation of this tRNA by the elongation apparatus.</text>
</comment>
<comment type="catalytic activity">
    <reaction evidence="1">
        <text>L-methionyl-tRNA(fMet) + (6R)-10-formyltetrahydrofolate = N-formyl-L-methionyl-tRNA(fMet) + (6S)-5,6,7,8-tetrahydrofolate + H(+)</text>
        <dbReference type="Rhea" id="RHEA:24380"/>
        <dbReference type="Rhea" id="RHEA-COMP:9952"/>
        <dbReference type="Rhea" id="RHEA-COMP:9953"/>
        <dbReference type="ChEBI" id="CHEBI:15378"/>
        <dbReference type="ChEBI" id="CHEBI:57453"/>
        <dbReference type="ChEBI" id="CHEBI:78530"/>
        <dbReference type="ChEBI" id="CHEBI:78844"/>
        <dbReference type="ChEBI" id="CHEBI:195366"/>
        <dbReference type="EC" id="2.1.2.9"/>
    </reaction>
</comment>
<comment type="similarity">
    <text evidence="1">Belongs to the Fmt family.</text>
</comment>
<reference key="1">
    <citation type="journal article" date="2006" name="Appl. Environ. Microbiol.">
        <title>Genome sequence of the chemolithoautotrophic nitrite-oxidizing bacterium Nitrobacter winogradskyi Nb-255.</title>
        <authorList>
            <person name="Starkenburg S.R."/>
            <person name="Chain P.S.G."/>
            <person name="Sayavedra-Soto L.A."/>
            <person name="Hauser L."/>
            <person name="Land M.L."/>
            <person name="Larimer F.W."/>
            <person name="Malfatti S.A."/>
            <person name="Klotz M.G."/>
            <person name="Bottomley P.J."/>
            <person name="Arp D.J."/>
            <person name="Hickey W.J."/>
        </authorList>
    </citation>
    <scope>NUCLEOTIDE SEQUENCE [LARGE SCALE GENOMIC DNA]</scope>
    <source>
        <strain>ATCC 25391 / DSM 10237 / CIP 104748 / NCIMB 11846 / Nb-255</strain>
    </source>
</reference>
<protein>
    <recommendedName>
        <fullName evidence="1">Methionyl-tRNA formyltransferase</fullName>
        <ecNumber evidence="1">2.1.2.9</ecNumber>
    </recommendedName>
</protein>
<proteinExistence type="inferred from homology"/>
<dbReference type="EC" id="2.1.2.9" evidence="1"/>
<dbReference type="EMBL" id="CP000115">
    <property type="protein sequence ID" value="ABA06313.1"/>
    <property type="molecule type" value="Genomic_DNA"/>
</dbReference>
<dbReference type="RefSeq" id="WP_011316229.1">
    <property type="nucleotide sequence ID" value="NC_007406.1"/>
</dbReference>
<dbReference type="SMR" id="Q3SN28"/>
<dbReference type="STRING" id="323098.Nwi_3065"/>
<dbReference type="KEGG" id="nwi:Nwi_3065"/>
<dbReference type="eggNOG" id="COG0223">
    <property type="taxonomic scope" value="Bacteria"/>
</dbReference>
<dbReference type="HOGENOM" id="CLU_033347_1_2_5"/>
<dbReference type="OrthoDB" id="9802815at2"/>
<dbReference type="Proteomes" id="UP000002531">
    <property type="component" value="Chromosome"/>
</dbReference>
<dbReference type="GO" id="GO:0005829">
    <property type="term" value="C:cytosol"/>
    <property type="evidence" value="ECO:0007669"/>
    <property type="project" value="TreeGrafter"/>
</dbReference>
<dbReference type="GO" id="GO:0004479">
    <property type="term" value="F:methionyl-tRNA formyltransferase activity"/>
    <property type="evidence" value="ECO:0007669"/>
    <property type="project" value="UniProtKB-UniRule"/>
</dbReference>
<dbReference type="CDD" id="cd08646">
    <property type="entry name" value="FMT_core_Met-tRNA-FMT_N"/>
    <property type="match status" value="1"/>
</dbReference>
<dbReference type="CDD" id="cd08704">
    <property type="entry name" value="Met_tRNA_FMT_C"/>
    <property type="match status" value="1"/>
</dbReference>
<dbReference type="Gene3D" id="3.10.25.10">
    <property type="entry name" value="Formyl transferase, C-terminal domain"/>
    <property type="match status" value="1"/>
</dbReference>
<dbReference type="Gene3D" id="3.40.50.170">
    <property type="entry name" value="Formyl transferase, N-terminal domain"/>
    <property type="match status" value="1"/>
</dbReference>
<dbReference type="HAMAP" id="MF_00182">
    <property type="entry name" value="Formyl_trans"/>
    <property type="match status" value="1"/>
</dbReference>
<dbReference type="InterPro" id="IPR005794">
    <property type="entry name" value="Fmt"/>
</dbReference>
<dbReference type="InterPro" id="IPR005793">
    <property type="entry name" value="Formyl_trans_C"/>
</dbReference>
<dbReference type="InterPro" id="IPR037022">
    <property type="entry name" value="Formyl_trans_C_sf"/>
</dbReference>
<dbReference type="InterPro" id="IPR002376">
    <property type="entry name" value="Formyl_transf_N"/>
</dbReference>
<dbReference type="InterPro" id="IPR036477">
    <property type="entry name" value="Formyl_transf_N_sf"/>
</dbReference>
<dbReference type="InterPro" id="IPR011034">
    <property type="entry name" value="Formyl_transferase-like_C_sf"/>
</dbReference>
<dbReference type="InterPro" id="IPR044135">
    <property type="entry name" value="Met-tRNA-FMT_C"/>
</dbReference>
<dbReference type="InterPro" id="IPR041711">
    <property type="entry name" value="Met-tRNA-FMT_N"/>
</dbReference>
<dbReference type="NCBIfam" id="TIGR00460">
    <property type="entry name" value="fmt"/>
    <property type="match status" value="1"/>
</dbReference>
<dbReference type="PANTHER" id="PTHR11138">
    <property type="entry name" value="METHIONYL-TRNA FORMYLTRANSFERASE"/>
    <property type="match status" value="1"/>
</dbReference>
<dbReference type="PANTHER" id="PTHR11138:SF5">
    <property type="entry name" value="METHIONYL-TRNA FORMYLTRANSFERASE, MITOCHONDRIAL"/>
    <property type="match status" value="1"/>
</dbReference>
<dbReference type="Pfam" id="PF02911">
    <property type="entry name" value="Formyl_trans_C"/>
    <property type="match status" value="1"/>
</dbReference>
<dbReference type="Pfam" id="PF00551">
    <property type="entry name" value="Formyl_trans_N"/>
    <property type="match status" value="1"/>
</dbReference>
<dbReference type="SUPFAM" id="SSF50486">
    <property type="entry name" value="FMT C-terminal domain-like"/>
    <property type="match status" value="1"/>
</dbReference>
<dbReference type="SUPFAM" id="SSF53328">
    <property type="entry name" value="Formyltransferase"/>
    <property type="match status" value="1"/>
</dbReference>